<protein>
    <recommendedName>
        <fullName evidence="1">Ribosomal protein uL3 glutamine methyltransferase</fullName>
        <shortName evidence="1">uL3 MTase</shortName>
        <ecNumber evidence="1">2.1.1.298</ecNumber>
    </recommendedName>
    <alternativeName>
        <fullName evidence="1">N5-glutamine methyltransferase PrmB</fullName>
    </alternativeName>
</protein>
<comment type="function">
    <text evidence="1">Specifically methylates large ribosomal subunit protein uL3 on 'Gln-150'.</text>
</comment>
<comment type="catalytic activity">
    <reaction evidence="1">
        <text>L-glutaminyl-[ribosomal protein uL3] + S-adenosyl-L-methionine = N(5)-methyl-L-glutaminyl-[ribosomal protein uL3] + S-adenosyl-L-homocysteine + H(+)</text>
        <dbReference type="Rhea" id="RHEA:45020"/>
        <dbReference type="Rhea" id="RHEA-COMP:11063"/>
        <dbReference type="Rhea" id="RHEA-COMP:11064"/>
        <dbReference type="ChEBI" id="CHEBI:15378"/>
        <dbReference type="ChEBI" id="CHEBI:30011"/>
        <dbReference type="ChEBI" id="CHEBI:57856"/>
        <dbReference type="ChEBI" id="CHEBI:59789"/>
        <dbReference type="ChEBI" id="CHEBI:61891"/>
        <dbReference type="EC" id="2.1.1.298"/>
    </reaction>
</comment>
<comment type="similarity">
    <text evidence="1">Belongs to the protein N5-glutamine methyltransferase family. PrmB subfamily.</text>
</comment>
<comment type="sequence caution" evidence="2">
    <conflict type="erroneous initiation">
        <sequence resource="EMBL-CDS" id="ABB62599"/>
    </conflict>
    <text>Extended N-terminus.</text>
</comment>
<dbReference type="EC" id="2.1.1.298" evidence="1"/>
<dbReference type="EMBL" id="CP000034">
    <property type="protein sequence ID" value="ABB62599.1"/>
    <property type="status" value="ALT_INIT"/>
    <property type="molecule type" value="Genomic_DNA"/>
</dbReference>
<dbReference type="RefSeq" id="WP_001306448.1">
    <property type="nucleotide sequence ID" value="NC_007606.1"/>
</dbReference>
<dbReference type="RefSeq" id="YP_404089.2">
    <property type="nucleotide sequence ID" value="NC_007606.1"/>
</dbReference>
<dbReference type="SMR" id="Q32DK7"/>
<dbReference type="STRING" id="300267.SDY_2530"/>
<dbReference type="EnsemblBacteria" id="ABB62599">
    <property type="protein sequence ID" value="ABB62599"/>
    <property type="gene ID" value="SDY_2530"/>
</dbReference>
<dbReference type="KEGG" id="sdy:SDY_2530"/>
<dbReference type="PATRIC" id="fig|300267.13.peg.3045"/>
<dbReference type="HOGENOM" id="CLU_018398_5_0_6"/>
<dbReference type="Proteomes" id="UP000002716">
    <property type="component" value="Chromosome"/>
</dbReference>
<dbReference type="GO" id="GO:0005829">
    <property type="term" value="C:cytosol"/>
    <property type="evidence" value="ECO:0007669"/>
    <property type="project" value="TreeGrafter"/>
</dbReference>
<dbReference type="GO" id="GO:0003676">
    <property type="term" value="F:nucleic acid binding"/>
    <property type="evidence" value="ECO:0007669"/>
    <property type="project" value="InterPro"/>
</dbReference>
<dbReference type="GO" id="GO:0036009">
    <property type="term" value="F:protein-glutamine N-methyltransferase activity"/>
    <property type="evidence" value="ECO:0007669"/>
    <property type="project" value="UniProtKB-UniRule"/>
</dbReference>
<dbReference type="GO" id="GO:0032259">
    <property type="term" value="P:methylation"/>
    <property type="evidence" value="ECO:0007669"/>
    <property type="project" value="UniProtKB-KW"/>
</dbReference>
<dbReference type="CDD" id="cd02440">
    <property type="entry name" value="AdoMet_MTases"/>
    <property type="match status" value="1"/>
</dbReference>
<dbReference type="FunFam" id="1.10.8.10:FF:000022">
    <property type="entry name" value="50S ribosomal protein L3 glutamine methyltransferase"/>
    <property type="match status" value="1"/>
</dbReference>
<dbReference type="FunFam" id="3.40.50.150:FF:000042">
    <property type="entry name" value="50S ribosomal protein L3 glutamine methyltransferase"/>
    <property type="match status" value="1"/>
</dbReference>
<dbReference type="Gene3D" id="1.10.8.10">
    <property type="entry name" value="DNA helicase RuvA subunit, C-terminal domain"/>
    <property type="match status" value="1"/>
</dbReference>
<dbReference type="Gene3D" id="3.40.50.150">
    <property type="entry name" value="Vaccinia Virus protein VP39"/>
    <property type="match status" value="1"/>
</dbReference>
<dbReference type="HAMAP" id="MF_02125">
    <property type="entry name" value="L3_methyltr_PrmB"/>
    <property type="match status" value="1"/>
</dbReference>
<dbReference type="InterPro" id="IPR002052">
    <property type="entry name" value="DNA_methylase_N6_adenine_CS"/>
</dbReference>
<dbReference type="InterPro" id="IPR004556">
    <property type="entry name" value="HemK-like"/>
</dbReference>
<dbReference type="InterPro" id="IPR017127">
    <property type="entry name" value="Ribosome_uL3_MTase"/>
</dbReference>
<dbReference type="InterPro" id="IPR029063">
    <property type="entry name" value="SAM-dependent_MTases_sf"/>
</dbReference>
<dbReference type="InterPro" id="IPR007848">
    <property type="entry name" value="Small_mtfrase_dom"/>
</dbReference>
<dbReference type="NCBIfam" id="TIGR00536">
    <property type="entry name" value="hemK_fam"/>
    <property type="match status" value="1"/>
</dbReference>
<dbReference type="NCBIfam" id="TIGR03533">
    <property type="entry name" value="L3_gln_methyl"/>
    <property type="match status" value="1"/>
</dbReference>
<dbReference type="PANTHER" id="PTHR47806">
    <property type="entry name" value="50S RIBOSOMAL PROTEIN L3 GLUTAMINE METHYLTRANSFERASE"/>
    <property type="match status" value="1"/>
</dbReference>
<dbReference type="PANTHER" id="PTHR47806:SF1">
    <property type="entry name" value="RIBOSOMAL PROTEIN UL3 GLUTAMINE METHYLTRANSFERASE"/>
    <property type="match status" value="1"/>
</dbReference>
<dbReference type="Pfam" id="PF05175">
    <property type="entry name" value="MTS"/>
    <property type="match status" value="1"/>
</dbReference>
<dbReference type="PIRSF" id="PIRSF037167">
    <property type="entry name" value="Mtase_YfcB_prd"/>
    <property type="match status" value="1"/>
</dbReference>
<dbReference type="SUPFAM" id="SSF53335">
    <property type="entry name" value="S-adenosyl-L-methionine-dependent methyltransferases"/>
    <property type="match status" value="1"/>
</dbReference>
<organism>
    <name type="scientific">Shigella dysenteriae serotype 1 (strain Sd197)</name>
    <dbReference type="NCBI Taxonomy" id="300267"/>
    <lineage>
        <taxon>Bacteria</taxon>
        <taxon>Pseudomonadati</taxon>
        <taxon>Pseudomonadota</taxon>
        <taxon>Gammaproteobacteria</taxon>
        <taxon>Enterobacterales</taxon>
        <taxon>Enterobacteriaceae</taxon>
        <taxon>Shigella</taxon>
    </lineage>
</organism>
<sequence>MDKIFVDEAVNELQTIQDMLRWSVSRFSAANIWYGHGTDNPWDEAVQLVLPSLYLPLDIPEDMRTARLTSSEKHRIVERVIRRVNERIPVAYLTNKAWFCGHEFYVDERVLVPRSPIGELINNKFAGLISKQPQHILDMCTGSGCIAIACAYAFPEAEVDAVDISPDALAVAEQNIEEHGLIHNVIPIRSDLFRDLPKVQYDLIVTNPPYVDAEDMSDLPNEYRHEPELGLASGTDGLKLTRRILGNAADYLADDGVLICEVGNSMVHLMEQYPDVPFTWLEFDNGGDGVFMLTKEQLLAAREHFAIYKD</sequence>
<reference key="1">
    <citation type="journal article" date="2005" name="Nucleic Acids Res.">
        <title>Genome dynamics and diversity of Shigella species, the etiologic agents of bacillary dysentery.</title>
        <authorList>
            <person name="Yang F."/>
            <person name="Yang J."/>
            <person name="Zhang X."/>
            <person name="Chen L."/>
            <person name="Jiang Y."/>
            <person name="Yan Y."/>
            <person name="Tang X."/>
            <person name="Wang J."/>
            <person name="Xiong Z."/>
            <person name="Dong J."/>
            <person name="Xue Y."/>
            <person name="Zhu Y."/>
            <person name="Xu X."/>
            <person name="Sun L."/>
            <person name="Chen S."/>
            <person name="Nie H."/>
            <person name="Peng J."/>
            <person name="Xu J."/>
            <person name="Wang Y."/>
            <person name="Yuan Z."/>
            <person name="Wen Y."/>
            <person name="Yao Z."/>
            <person name="Shen Y."/>
            <person name="Qiang B."/>
            <person name="Hou Y."/>
            <person name="Yu J."/>
            <person name="Jin Q."/>
        </authorList>
    </citation>
    <scope>NUCLEOTIDE SEQUENCE [LARGE SCALE GENOMIC DNA]</scope>
    <source>
        <strain>Sd197</strain>
    </source>
</reference>
<accession>Q32DK7</accession>
<name>PRMB_SHIDS</name>
<proteinExistence type="inferred from homology"/>
<evidence type="ECO:0000255" key="1">
    <source>
        <dbReference type="HAMAP-Rule" id="MF_02125"/>
    </source>
</evidence>
<evidence type="ECO:0000305" key="2"/>
<keyword id="KW-0489">Methyltransferase</keyword>
<keyword id="KW-1185">Reference proteome</keyword>
<keyword id="KW-0949">S-adenosyl-L-methionine</keyword>
<keyword id="KW-0808">Transferase</keyword>
<feature type="chain" id="PRO_0000414182" description="Ribosomal protein uL3 glutamine methyltransferase">
    <location>
        <begin position="1"/>
        <end position="310"/>
    </location>
</feature>
<gene>
    <name evidence="1" type="primary">prmB</name>
    <name type="synonym">yfcB</name>
    <name type="ordered locus">SDY_2530</name>
</gene>